<protein>
    <recommendedName>
        <fullName evidence="1">Tautomerase PptA</fullName>
        <ecNumber evidence="1">5.3.2.-</ecNumber>
    </recommendedName>
</protein>
<gene>
    <name evidence="1" type="primary">pptA</name>
    <name type="ordered locus">EcE24377A_1642</name>
</gene>
<evidence type="ECO:0000255" key="1">
    <source>
        <dbReference type="HAMAP-Rule" id="MF_00718"/>
    </source>
</evidence>
<sequence length="75" mass="8488">MPHIDIKCFPRELDEQQKAALAADITDVIIRHLNSKDSSISIALQQIQPESWQAIWDAEIAPQMEALIKKPGYSM</sequence>
<dbReference type="EC" id="5.3.2.-" evidence="1"/>
<dbReference type="EMBL" id="CP000800">
    <property type="protein sequence ID" value="ABV20800.1"/>
    <property type="molecule type" value="Genomic_DNA"/>
</dbReference>
<dbReference type="RefSeq" id="WP_001120141.1">
    <property type="nucleotide sequence ID" value="NC_009801.1"/>
</dbReference>
<dbReference type="SMR" id="A7ZLQ4"/>
<dbReference type="GeneID" id="75203165"/>
<dbReference type="KEGG" id="ecw:EcE24377A_1642"/>
<dbReference type="HOGENOM" id="CLU_183611_0_1_6"/>
<dbReference type="Proteomes" id="UP000001122">
    <property type="component" value="Chromosome"/>
</dbReference>
<dbReference type="GO" id="GO:0005737">
    <property type="term" value="C:cytoplasm"/>
    <property type="evidence" value="ECO:0007669"/>
    <property type="project" value="UniProtKB-SubCell"/>
</dbReference>
<dbReference type="GO" id="GO:0016862">
    <property type="term" value="F:intramolecular oxidoreductase activity, interconverting keto- and enol-groups"/>
    <property type="evidence" value="ECO:0007669"/>
    <property type="project" value="UniProtKB-UniRule"/>
</dbReference>
<dbReference type="Gene3D" id="3.30.429.10">
    <property type="entry name" value="Macrophage Migration Inhibitory Factor"/>
    <property type="match status" value="1"/>
</dbReference>
<dbReference type="HAMAP" id="MF_00718">
    <property type="entry name" value="Tautomerase_PptA"/>
    <property type="match status" value="1"/>
</dbReference>
<dbReference type="InterPro" id="IPR004370">
    <property type="entry name" value="4-OT-like_dom"/>
</dbReference>
<dbReference type="InterPro" id="IPR014347">
    <property type="entry name" value="Tautomerase/MIF_sf"/>
</dbReference>
<dbReference type="InterPro" id="IPR017284">
    <property type="entry name" value="Tautomerase_PptA"/>
</dbReference>
<dbReference type="NCBIfam" id="NF002324">
    <property type="entry name" value="PRK01271.1"/>
    <property type="match status" value="1"/>
</dbReference>
<dbReference type="Pfam" id="PF01361">
    <property type="entry name" value="Tautomerase"/>
    <property type="match status" value="1"/>
</dbReference>
<dbReference type="PIRSF" id="PIRSF037799">
    <property type="entry name" value="Tautomer_YdcE_prd"/>
    <property type="match status" value="1"/>
</dbReference>
<dbReference type="SUPFAM" id="SSF55331">
    <property type="entry name" value="Tautomerase/MIF"/>
    <property type="match status" value="1"/>
</dbReference>
<keyword id="KW-0963">Cytoplasm</keyword>
<keyword id="KW-0413">Isomerase</keyword>
<keyword id="KW-1185">Reference proteome</keyword>
<name>PPTA_ECO24</name>
<feature type="initiator methionine" description="Removed" evidence="1">
    <location>
        <position position="1"/>
    </location>
</feature>
<feature type="chain" id="PRO_0000348343" description="Tautomerase PptA">
    <location>
        <begin position="2"/>
        <end position="75"/>
    </location>
</feature>
<feature type="active site" description="Proton acceptor; via imino nitrogen" evidence="1">
    <location>
        <position position="2"/>
    </location>
</feature>
<proteinExistence type="inferred from homology"/>
<reference key="1">
    <citation type="journal article" date="2008" name="J. Bacteriol.">
        <title>The pangenome structure of Escherichia coli: comparative genomic analysis of E. coli commensal and pathogenic isolates.</title>
        <authorList>
            <person name="Rasko D.A."/>
            <person name="Rosovitz M.J."/>
            <person name="Myers G.S.A."/>
            <person name="Mongodin E.F."/>
            <person name="Fricke W.F."/>
            <person name="Gajer P."/>
            <person name="Crabtree J."/>
            <person name="Sebaihia M."/>
            <person name="Thomson N.R."/>
            <person name="Chaudhuri R."/>
            <person name="Henderson I.R."/>
            <person name="Sperandio V."/>
            <person name="Ravel J."/>
        </authorList>
    </citation>
    <scope>NUCLEOTIDE SEQUENCE [LARGE SCALE GENOMIC DNA]</scope>
    <source>
        <strain>E24377A / ETEC</strain>
    </source>
</reference>
<comment type="subunit">
    <text evidence="1">Homodimer.</text>
</comment>
<comment type="subcellular location">
    <subcellularLocation>
        <location evidence="1">Cytoplasm</location>
    </subcellularLocation>
</comment>
<comment type="similarity">
    <text evidence="1">Belongs to the 4-oxalocrotonate tautomerase family. PptA subfamily.</text>
</comment>
<accession>A7ZLQ4</accession>
<organism>
    <name type="scientific">Escherichia coli O139:H28 (strain E24377A / ETEC)</name>
    <dbReference type="NCBI Taxonomy" id="331111"/>
    <lineage>
        <taxon>Bacteria</taxon>
        <taxon>Pseudomonadati</taxon>
        <taxon>Pseudomonadota</taxon>
        <taxon>Gammaproteobacteria</taxon>
        <taxon>Enterobacterales</taxon>
        <taxon>Enterobacteriaceae</taxon>
        <taxon>Escherichia</taxon>
    </lineage>
</organism>